<evidence type="ECO:0000250" key="1"/>
<evidence type="ECO:0000256" key="2">
    <source>
        <dbReference type="SAM" id="MobiDB-lite"/>
    </source>
</evidence>
<evidence type="ECO:0000269" key="3">
    <source>
    </source>
</evidence>
<evidence type="ECO:0000305" key="4"/>
<comment type="function">
    <text evidence="3">Serine/threonine haspin-like protein kinase involved in cell cycle regulation.</text>
</comment>
<comment type="catalytic activity">
    <reaction>
        <text>L-seryl-[protein] + ATP = O-phospho-L-seryl-[protein] + ADP + H(+)</text>
        <dbReference type="Rhea" id="RHEA:17989"/>
        <dbReference type="Rhea" id="RHEA-COMP:9863"/>
        <dbReference type="Rhea" id="RHEA-COMP:11604"/>
        <dbReference type="ChEBI" id="CHEBI:15378"/>
        <dbReference type="ChEBI" id="CHEBI:29999"/>
        <dbReference type="ChEBI" id="CHEBI:30616"/>
        <dbReference type="ChEBI" id="CHEBI:83421"/>
        <dbReference type="ChEBI" id="CHEBI:456216"/>
        <dbReference type="EC" id="2.7.11.1"/>
    </reaction>
</comment>
<comment type="catalytic activity">
    <reaction>
        <text>L-threonyl-[protein] + ATP = O-phospho-L-threonyl-[protein] + ADP + H(+)</text>
        <dbReference type="Rhea" id="RHEA:46608"/>
        <dbReference type="Rhea" id="RHEA-COMP:11060"/>
        <dbReference type="Rhea" id="RHEA-COMP:11605"/>
        <dbReference type="ChEBI" id="CHEBI:15378"/>
        <dbReference type="ChEBI" id="CHEBI:30013"/>
        <dbReference type="ChEBI" id="CHEBI:30616"/>
        <dbReference type="ChEBI" id="CHEBI:61977"/>
        <dbReference type="ChEBI" id="CHEBI:456216"/>
        <dbReference type="EC" id="2.7.11.1"/>
    </reaction>
</comment>
<comment type="induction">
    <text evidence="3">Absent in G1-arrested cells and accumulates in G2-M.</text>
</comment>
<comment type="domain">
    <text evidence="3">The KEN and D (destructive) boxes are required for the cell cycle-controlled ALK2 degradation by the anaphase promoting complex (APC) pathway.</text>
</comment>
<comment type="domain">
    <text evidence="3">The protein kinase domain is predicted to be catalytically inactive. However, weak kinase activity was experimentally demonstrated.</text>
</comment>
<comment type="PTM">
    <text evidence="3">Periodically phosphorylated during the cell cycle with a phosphorylation peak during mitosis and hyperphosphorylated after DNA damage.</text>
</comment>
<comment type="similarity">
    <text evidence="4">Belongs to the protein kinase superfamily. Ser/Thr protein kinase family. Haspin subfamily.</text>
</comment>
<sequence length="676" mass="76372">MNFDAVADQQMTDRRYFALEVAESDDADSSLNSSSMGSPAVDVGRKVYKITSHKGSAEDESQSFFTSSDSPTSKTRPVGKTIENDDYYGKRSSTGSSLKQLFNKININDTAHSSNKENVSQSVLSENKLLSPSKRLSKQGLTKVTNSKFRTPLRPISNQSTLSRDEPVKDFRSLKFRSGSDFKCWGDEKTSSHVHSSSVNSVNSFTSTTSSSKWKFWKNDNLLSRSLSSRSVNDQDPNFVQPKPTNSLQKKSSISSFHNSIFGGGKHTEKKRNSGFIMPDHQSTKELNHKHSSSNLSFRSLKHKTSHSSLNKLKVRRKGNTQELNHPIKKTCQISLPVPDQVSKDKIQLKLKNSTSLASLSSEVTPINTLDYNDSILQQILQLCDVKYILHDLREAQSLGLFTLNTRSVQLSHNFWQTYHSDMQTSLICKKVCLGALSDLTTSNLISLHELKSLRLIQGTSGVANLLQAYVVPSNQCENDQNLILYLFFKYQGTPLSRCSNIDYSQALSIFWQCSSILYVAESKFQLEHRNLTLDHILIDSKGNVTLIDMKCCRFLNIDNNKASYTRLDHHYFFQGRGTLQFEIYELMRSMLPQPISWATFEPRTNLLWLYHLSSSLLKMAKKAVVSGALNREENILIELTHLLDPARKHSKTIFKKELVIRTCGDLLSLKGEIMQ</sequence>
<keyword id="KW-0067">ATP-binding</keyword>
<keyword id="KW-0131">Cell cycle</keyword>
<keyword id="KW-0227">DNA damage</keyword>
<keyword id="KW-0418">Kinase</keyword>
<keyword id="KW-0547">Nucleotide-binding</keyword>
<keyword id="KW-0597">Phosphoprotein</keyword>
<keyword id="KW-1185">Reference proteome</keyword>
<keyword id="KW-0723">Serine/threonine-protein kinase</keyword>
<keyword id="KW-0808">Transferase</keyword>
<name>ALK2_YEAST</name>
<dbReference type="EC" id="2.7.11.1"/>
<dbReference type="EMBL" id="Z35770">
    <property type="protein sequence ID" value="CAA84828.1"/>
    <property type="molecule type" value="Genomic_DNA"/>
</dbReference>
<dbReference type="EMBL" id="S47695">
    <property type="protein sequence ID" value="AAB23988.1"/>
    <property type="molecule type" value="Genomic_DNA"/>
</dbReference>
<dbReference type="EMBL" id="BK006936">
    <property type="protein sequence ID" value="DAA07110.1"/>
    <property type="molecule type" value="Genomic_DNA"/>
</dbReference>
<dbReference type="PIR" id="S41217">
    <property type="entry name" value="S41217"/>
</dbReference>
<dbReference type="RefSeq" id="NP_009544.1">
    <property type="nucleotide sequence ID" value="NM_001178249.1"/>
</dbReference>
<dbReference type="BioGRID" id="32690">
    <property type="interactions" value="194"/>
</dbReference>
<dbReference type="DIP" id="DIP-5484N"/>
<dbReference type="FunCoup" id="P32789">
    <property type="interactions" value="34"/>
</dbReference>
<dbReference type="IntAct" id="P32789">
    <property type="interactions" value="9"/>
</dbReference>
<dbReference type="MINT" id="P32789"/>
<dbReference type="STRING" id="4932.YBL009W"/>
<dbReference type="iPTMnet" id="P32789"/>
<dbReference type="PaxDb" id="4932-YBL009W"/>
<dbReference type="PeptideAtlas" id="P32789"/>
<dbReference type="EnsemblFungi" id="YBL009W_mRNA">
    <property type="protein sequence ID" value="YBL009W"/>
    <property type="gene ID" value="YBL009W"/>
</dbReference>
<dbReference type="GeneID" id="852274"/>
<dbReference type="KEGG" id="sce:YBL009W"/>
<dbReference type="AGR" id="SGD:S000000105"/>
<dbReference type="SGD" id="S000000105">
    <property type="gene designation" value="ALK2"/>
</dbReference>
<dbReference type="VEuPathDB" id="FungiDB:YBL009W"/>
<dbReference type="eggNOG" id="KOG2464">
    <property type="taxonomic scope" value="Eukaryota"/>
</dbReference>
<dbReference type="GeneTree" id="ENSGT00940000167518"/>
<dbReference type="HOGENOM" id="CLU_022568_0_0_1"/>
<dbReference type="InParanoid" id="P32789"/>
<dbReference type="OMA" id="NQCENDQ"/>
<dbReference type="OrthoDB" id="5327538at2759"/>
<dbReference type="BioCyc" id="YEAST:G3O-28915-MONOMER"/>
<dbReference type="Reactome" id="R-SCE-9020702">
    <property type="pathway name" value="Interleukin-1 signaling"/>
</dbReference>
<dbReference type="BioGRID-ORCS" id="852274">
    <property type="hits" value="6 hits in 13 CRISPR screens"/>
</dbReference>
<dbReference type="PRO" id="PR:P32789"/>
<dbReference type="Proteomes" id="UP000002311">
    <property type="component" value="Chromosome II"/>
</dbReference>
<dbReference type="RNAct" id="P32789">
    <property type="molecule type" value="protein"/>
</dbReference>
<dbReference type="GO" id="GO:0005737">
    <property type="term" value="C:cytoplasm"/>
    <property type="evidence" value="ECO:0000318"/>
    <property type="project" value="GO_Central"/>
</dbReference>
<dbReference type="GO" id="GO:0005634">
    <property type="term" value="C:nucleus"/>
    <property type="evidence" value="ECO:0000318"/>
    <property type="project" value="GO_Central"/>
</dbReference>
<dbReference type="GO" id="GO:0005524">
    <property type="term" value="F:ATP binding"/>
    <property type="evidence" value="ECO:0007669"/>
    <property type="project" value="UniProtKB-KW"/>
</dbReference>
<dbReference type="GO" id="GO:0072354">
    <property type="term" value="F:histone H3T3 kinase activity"/>
    <property type="evidence" value="ECO:0000318"/>
    <property type="project" value="GO_Central"/>
</dbReference>
<dbReference type="GO" id="GO:0004672">
    <property type="term" value="F:protein kinase activity"/>
    <property type="evidence" value="ECO:0000314"/>
    <property type="project" value="SGD"/>
</dbReference>
<dbReference type="GO" id="GO:0106310">
    <property type="term" value="F:protein serine kinase activity"/>
    <property type="evidence" value="ECO:0007669"/>
    <property type="project" value="RHEA"/>
</dbReference>
<dbReference type="GO" id="GO:0006974">
    <property type="term" value="P:DNA damage response"/>
    <property type="evidence" value="ECO:0007669"/>
    <property type="project" value="UniProtKB-KW"/>
</dbReference>
<dbReference type="GO" id="GO:0035556">
    <property type="term" value="P:intracellular signal transduction"/>
    <property type="evidence" value="ECO:0000318"/>
    <property type="project" value="GO_Central"/>
</dbReference>
<dbReference type="GO" id="GO:0000278">
    <property type="term" value="P:mitotic cell cycle"/>
    <property type="evidence" value="ECO:0000315"/>
    <property type="project" value="SGD"/>
</dbReference>
<dbReference type="GO" id="GO:0044879">
    <property type="term" value="P:mitotic morphogenesis checkpoint signaling"/>
    <property type="evidence" value="ECO:0000315"/>
    <property type="project" value="SGD"/>
</dbReference>
<dbReference type="Gene3D" id="1.10.510.10">
    <property type="entry name" value="Transferase(Phosphotransferase) domain 1"/>
    <property type="match status" value="1"/>
</dbReference>
<dbReference type="InterPro" id="IPR024604">
    <property type="entry name" value="GSG2_C"/>
</dbReference>
<dbReference type="InterPro" id="IPR011009">
    <property type="entry name" value="Kinase-like_dom_sf"/>
</dbReference>
<dbReference type="PANTHER" id="PTHR24419">
    <property type="entry name" value="INTERLEUKIN-1 RECEPTOR-ASSOCIATED KINASE"/>
    <property type="match status" value="1"/>
</dbReference>
<dbReference type="PANTHER" id="PTHR24419:SF18">
    <property type="entry name" value="SERINE_THREONINE-PROTEIN KINASE HASPIN"/>
    <property type="match status" value="1"/>
</dbReference>
<dbReference type="Pfam" id="PF12330">
    <property type="entry name" value="Haspin_kinase"/>
    <property type="match status" value="1"/>
</dbReference>
<dbReference type="SMART" id="SM01331">
    <property type="entry name" value="DUF3635"/>
    <property type="match status" value="1"/>
</dbReference>
<dbReference type="SUPFAM" id="SSF56112">
    <property type="entry name" value="Protein kinase-like (PK-like)"/>
    <property type="match status" value="1"/>
</dbReference>
<reference key="1">
    <citation type="journal article" date="1992" name="Yeast">
        <title>Sequence of a 12.7 kb segment of yeast chromosome II identifies a PDR-like gene and several new open reading frames.</title>
        <authorList>
            <person name="Delaveau T."/>
            <person name="Jacq C."/>
            <person name="Perea J."/>
        </authorList>
    </citation>
    <scope>NUCLEOTIDE SEQUENCE [GENOMIC DNA]</scope>
    <source>
        <strain>ATCC 204508 / S288c</strain>
    </source>
</reference>
<reference key="2">
    <citation type="journal article" date="1994" name="EMBO J.">
        <title>Complete DNA sequence of yeast chromosome II.</title>
        <authorList>
            <person name="Feldmann H."/>
            <person name="Aigle M."/>
            <person name="Aljinovic G."/>
            <person name="Andre B."/>
            <person name="Baclet M.C."/>
            <person name="Barthe C."/>
            <person name="Baur A."/>
            <person name="Becam A.-M."/>
            <person name="Biteau N."/>
            <person name="Boles E."/>
            <person name="Brandt T."/>
            <person name="Brendel M."/>
            <person name="Brueckner M."/>
            <person name="Bussereau F."/>
            <person name="Christiansen C."/>
            <person name="Contreras R."/>
            <person name="Crouzet M."/>
            <person name="Cziepluch C."/>
            <person name="Demolis N."/>
            <person name="Delaveau T."/>
            <person name="Doignon F."/>
            <person name="Domdey H."/>
            <person name="Duesterhus S."/>
            <person name="Dubois E."/>
            <person name="Dujon B."/>
            <person name="El Bakkoury M."/>
            <person name="Entian K.-D."/>
            <person name="Feuermann M."/>
            <person name="Fiers W."/>
            <person name="Fobo G.M."/>
            <person name="Fritz C."/>
            <person name="Gassenhuber J."/>
            <person name="Glansdorff N."/>
            <person name="Goffeau A."/>
            <person name="Grivell L.A."/>
            <person name="de Haan M."/>
            <person name="Hein C."/>
            <person name="Herbert C.J."/>
            <person name="Hollenberg C.P."/>
            <person name="Holmstroem K."/>
            <person name="Jacq C."/>
            <person name="Jacquet M."/>
            <person name="Jauniaux J.-C."/>
            <person name="Jonniaux J.-L."/>
            <person name="Kallesoee T."/>
            <person name="Kiesau P."/>
            <person name="Kirchrath L."/>
            <person name="Koetter P."/>
            <person name="Korol S."/>
            <person name="Liebl S."/>
            <person name="Logghe M."/>
            <person name="Lohan A.J.E."/>
            <person name="Louis E.J."/>
            <person name="Li Z.Y."/>
            <person name="Maat M.J."/>
            <person name="Mallet L."/>
            <person name="Mannhaupt G."/>
            <person name="Messenguy F."/>
            <person name="Miosga T."/>
            <person name="Molemans F."/>
            <person name="Mueller S."/>
            <person name="Nasr F."/>
            <person name="Obermaier B."/>
            <person name="Perea J."/>
            <person name="Pierard A."/>
            <person name="Piravandi E."/>
            <person name="Pohl F.M."/>
            <person name="Pohl T.M."/>
            <person name="Potier S."/>
            <person name="Proft M."/>
            <person name="Purnelle B."/>
            <person name="Ramezani Rad M."/>
            <person name="Rieger M."/>
            <person name="Rose M."/>
            <person name="Schaaff-Gerstenschlaeger I."/>
            <person name="Scherens B."/>
            <person name="Schwarzlose C."/>
            <person name="Skala J."/>
            <person name="Slonimski P.P."/>
            <person name="Smits P.H.M."/>
            <person name="Souciet J.-L."/>
            <person name="Steensma H.Y."/>
            <person name="Stucka R."/>
            <person name="Urrestarazu L.A."/>
            <person name="van der Aart Q.J.M."/>
            <person name="Van Dyck L."/>
            <person name="Vassarotti A."/>
            <person name="Vetter I."/>
            <person name="Vierendeels F."/>
            <person name="Vissers S."/>
            <person name="Wagner G."/>
            <person name="de Wergifosse P."/>
            <person name="Wolfe K.H."/>
            <person name="Zagulski M."/>
            <person name="Zimmermann F.K."/>
            <person name="Mewes H.-W."/>
            <person name="Kleine K."/>
        </authorList>
    </citation>
    <scope>NUCLEOTIDE SEQUENCE [LARGE SCALE GENOMIC DNA]</scope>
    <source>
        <strain>ATCC 204508 / S288c</strain>
    </source>
</reference>
<reference key="3">
    <citation type="journal article" date="2014" name="G3 (Bethesda)">
        <title>The reference genome sequence of Saccharomyces cerevisiae: Then and now.</title>
        <authorList>
            <person name="Engel S.R."/>
            <person name="Dietrich F.S."/>
            <person name="Fisk D.G."/>
            <person name="Binkley G."/>
            <person name="Balakrishnan R."/>
            <person name="Costanzo M.C."/>
            <person name="Dwight S.S."/>
            <person name="Hitz B.C."/>
            <person name="Karra K."/>
            <person name="Nash R.S."/>
            <person name="Weng S."/>
            <person name="Wong E.D."/>
            <person name="Lloyd P."/>
            <person name="Skrzypek M.S."/>
            <person name="Miyasato S.R."/>
            <person name="Simison M."/>
            <person name="Cherry J.M."/>
        </authorList>
    </citation>
    <scope>GENOME REANNOTATION</scope>
    <source>
        <strain>ATCC 204508 / S288c</strain>
    </source>
</reference>
<reference key="4">
    <citation type="journal article" date="2006" name="Cell Cycle">
        <title>Alk1 and Alk2 are two new cell cycle-regulated haspin-like proteins in budding yeast.</title>
        <authorList>
            <person name="Nespoli A."/>
            <person name="Vercillo R."/>
            <person name="di Nola L."/>
            <person name="Diani L."/>
            <person name="Giannattasio M."/>
            <person name="Plevani P."/>
            <person name="Muzi-Falconi M."/>
        </authorList>
    </citation>
    <scope>FUNCTION</scope>
    <scope>INDUCTION</scope>
    <scope>PHOSPHORYLATION</scope>
    <scope>DOMAINS</scope>
    <scope>MUTAGENESIS OF 528-E--L-532</scope>
</reference>
<reference key="5">
    <citation type="journal article" date="2012" name="Proc. Natl. Acad. Sci. U.S.A.">
        <title>N-terminal acetylome analyses and functional insights of the N-terminal acetyltransferase NatB.</title>
        <authorList>
            <person name="Van Damme P."/>
            <person name="Lasa M."/>
            <person name="Polevoda B."/>
            <person name="Gazquez C."/>
            <person name="Elosegui-Artola A."/>
            <person name="Kim D.S."/>
            <person name="De Juan-Pardo E."/>
            <person name="Demeyer K."/>
            <person name="Hole K."/>
            <person name="Larrea E."/>
            <person name="Timmerman E."/>
            <person name="Prieto J."/>
            <person name="Arnesen T."/>
            <person name="Sherman F."/>
            <person name="Gevaert K."/>
            <person name="Aldabe R."/>
        </authorList>
    </citation>
    <scope>IDENTIFICATION BY MASS SPECTROMETRY [LARGE SCALE ANALYSIS]</scope>
</reference>
<gene>
    <name type="primary">ALK2</name>
    <name type="ordered locus">YBL009W</name>
    <name type="ORF">YBL0317</name>
</gene>
<organism>
    <name type="scientific">Saccharomyces cerevisiae (strain ATCC 204508 / S288c)</name>
    <name type="common">Baker's yeast</name>
    <dbReference type="NCBI Taxonomy" id="559292"/>
    <lineage>
        <taxon>Eukaryota</taxon>
        <taxon>Fungi</taxon>
        <taxon>Dikarya</taxon>
        <taxon>Ascomycota</taxon>
        <taxon>Saccharomycotina</taxon>
        <taxon>Saccharomycetes</taxon>
        <taxon>Saccharomycetales</taxon>
        <taxon>Saccharomycetaceae</taxon>
        <taxon>Saccharomyces</taxon>
    </lineage>
</organism>
<protein>
    <recommendedName>
        <fullName>Serine/threonine-protein kinase Haspin homolog ALK2</fullName>
        <ecNumber>2.7.11.1</ecNumber>
    </recommendedName>
</protein>
<proteinExistence type="evidence at protein level"/>
<feature type="chain" id="PRO_0000202464" description="Serine/threonine-protein kinase Haspin homolog ALK2">
    <location>
        <begin position="1"/>
        <end position="676"/>
    </location>
</feature>
<feature type="domain" description="Protein kinase">
    <location>
        <begin position="383"/>
        <end position="672"/>
    </location>
</feature>
<feature type="region of interest" description="Disordered" evidence="2">
    <location>
        <begin position="53"/>
        <end position="93"/>
    </location>
</feature>
<feature type="region of interest" description="Disordered" evidence="2">
    <location>
        <begin position="228"/>
        <end position="312"/>
    </location>
</feature>
<feature type="short sequence motif" description="KEN box">
    <location>
        <begin position="116"/>
        <end position="118"/>
    </location>
</feature>
<feature type="short sequence motif" description="D box">
    <location>
        <begin position="150"/>
        <end position="158"/>
    </location>
</feature>
<feature type="compositionally biased region" description="Polar residues" evidence="2">
    <location>
        <begin position="62"/>
        <end position="75"/>
    </location>
</feature>
<feature type="compositionally biased region" description="Polar residues" evidence="2">
    <location>
        <begin position="232"/>
        <end position="259"/>
    </location>
</feature>
<feature type="binding site" evidence="1">
    <location>
        <begin position="389"/>
        <end position="397"/>
    </location>
    <ligand>
        <name>ATP</name>
        <dbReference type="ChEBI" id="CHEBI:30616"/>
    </ligand>
</feature>
<feature type="binding site" evidence="1">
    <location>
        <position position="430"/>
    </location>
    <ligand>
        <name>ATP</name>
        <dbReference type="ChEBI" id="CHEBI:30616"/>
    </ligand>
</feature>
<feature type="mutagenesis site" description="Strongly reduces kinase activity." evidence="3">
    <original>EHRNL</original>
    <variation>AAAAA</variation>
    <location>
        <begin position="528"/>
        <end position="532"/>
    </location>
</feature>
<accession>P32789</accession>
<accession>D6VPZ0</accession>